<name>IL21R_MOUSE</name>
<feature type="signal peptide" evidence="3">
    <location>
        <begin position="1"/>
        <end position="19"/>
    </location>
</feature>
<feature type="chain" id="PRO_0000010882" description="Interleukin-21 receptor">
    <location>
        <begin position="20"/>
        <end position="529"/>
    </location>
</feature>
<feature type="topological domain" description="Extracellular" evidence="3">
    <location>
        <begin position="20"/>
        <end position="237"/>
    </location>
</feature>
<feature type="transmembrane region" description="Helical" evidence="3">
    <location>
        <begin position="238"/>
        <end position="258"/>
    </location>
</feature>
<feature type="topological domain" description="Cytoplasmic" evidence="3">
    <location>
        <begin position="259"/>
        <end position="529"/>
    </location>
</feature>
<feature type="domain" description="Fibronectin type-III 1" evidence="4">
    <location>
        <begin position="21"/>
        <end position="118"/>
    </location>
</feature>
<feature type="domain" description="Fibronectin type-III 2" evidence="4">
    <location>
        <begin position="119"/>
        <end position="228"/>
    </location>
</feature>
<feature type="region of interest" description="Disordered" evidence="5">
    <location>
        <begin position="458"/>
        <end position="529"/>
    </location>
</feature>
<feature type="short sequence motif" description="WSXWS motif">
    <location>
        <begin position="214"/>
        <end position="218"/>
    </location>
</feature>
<feature type="short sequence motif" description="Box 1 motif">
    <location>
        <begin position="266"/>
        <end position="274"/>
    </location>
</feature>
<feature type="glycosylation site" description="N-linked (GlcNAc...) asparagine" evidence="3">
    <location>
        <position position="73"/>
    </location>
</feature>
<feature type="glycosylation site" description="N-linked (GlcNAc...) asparagine" evidence="3">
    <location>
        <position position="97"/>
    </location>
</feature>
<feature type="glycosylation site" description="N-linked (GlcNAc...) asparagine" evidence="3">
    <location>
        <position position="104"/>
    </location>
</feature>
<feature type="glycosylation site" description="N-linked (GlcNAc...) asparagine" evidence="3">
    <location>
        <position position="125"/>
    </location>
</feature>
<feature type="glycosylation site" description="N-linked (GlcNAc...) asparagine" evidence="3">
    <location>
        <position position="182"/>
    </location>
</feature>
<feature type="glycosylation site" description="C-linked (Man) tryptophan" evidence="2">
    <location>
        <position position="214"/>
    </location>
</feature>
<feature type="disulfide bond" evidence="1">
    <location>
        <begin position="20"/>
        <end position="109"/>
    </location>
</feature>
<feature type="disulfide bond" evidence="1">
    <location>
        <begin position="25"/>
        <end position="35"/>
    </location>
</feature>
<feature type="disulfide bond" evidence="1">
    <location>
        <begin position="65"/>
        <end position="81"/>
    </location>
</feature>
<feature type="sequence variant" description="In strain: BALB/c and SJL/J.">
    <original>R</original>
    <variation>K</variation>
    <location>
        <position position="69"/>
    </location>
</feature>
<feature type="sequence variant" description="In strain: BALB/c and SJL/J.">
    <original>V</original>
    <variation>M</variation>
    <location>
        <position position="200"/>
    </location>
</feature>
<protein>
    <recommendedName>
        <fullName>Interleukin-21 receptor</fullName>
        <shortName>IL-21 receptor</shortName>
        <shortName>IL-21R</shortName>
    </recommendedName>
    <alternativeName>
        <fullName>Lymphocyte receptor beta</fullName>
        <shortName>LR-beta</shortName>
    </alternativeName>
    <alternativeName>
        <fullName>Novel cytokine receptor 8</fullName>
        <shortName>NR8</shortName>
    </alternativeName>
    <alternativeName>
        <fullName>Novel interleukin receptor</fullName>
    </alternativeName>
    <cdAntigenName>CD360</cdAntigenName>
</protein>
<sequence length="529" mass="58355">MPRGPVAALLLLILHGAWSCLDLTCYTDYLWTITCVLETRSPNPSILSLTWQDEYEELQDQETFCSLHRSGHNTTHIWYTCHMRLSQFLSDEVFIVNVTDQSGNNSQECGSFVLAESIKPAPPLNVTVAFSGRYDISWDSAYDEPSNYVLRGKLQYELQYRNLRDPYAVRPVTKLISVDSRNVSLLPEEFHKDSSYQLQVRAAPQPGTSFRGTWSEWSDPVIFQTQAGEPEAGWDPHMLLLLAVLIIVLVFMGLKIHLPWRLWKKIWAPVPTPESFFQPLYREHSGNFKKWVNTPFTASSIELVPQSSTTTSALHLSLYPAKEKKFPGLPGLEEQLECDGMSEPGHWCIIPLAAGQAVSAYSEERDRPYGLVSIDTVTVGDAEGLCVWPCSCEDDGYPAMNLDAGRESGPNSEDLLLVTDPAFLSCGCVSGSGLRLGGSPGSLLDRLRLSFAKEGDWTADPTWRTGSPGGGSESEAGSPPGLDMDTFDSGFAGSDCGSPVETDEGPPRSYLRQWVVRTPPPVDSGAQSS</sequence>
<reference key="1">
    <citation type="journal article" date="2000" name="Nature">
        <title>Interleukin 21 and its receptor are involved in NK cell expansion and regulation of lymphocyte function.</title>
        <authorList>
            <person name="Parrish-Novak J."/>
            <person name="Dillon S.R."/>
            <person name="Nelson A."/>
            <person name="Hammond A."/>
            <person name="Sprecher C."/>
            <person name="Gross J.A."/>
            <person name="Johnston J."/>
            <person name="Madden K."/>
            <person name="Xu W."/>
            <person name="West J."/>
            <person name="Schrader S."/>
            <person name="Burkhead S."/>
            <person name="Heipel M."/>
            <person name="Brandt C."/>
            <person name="Kuijper J.L."/>
            <person name="Kramer J."/>
            <person name="Conklin D."/>
            <person name="Presnell S.R."/>
            <person name="Berry J."/>
            <person name="Shiota F."/>
            <person name="Bort S."/>
            <person name="Hambly K."/>
            <person name="Mudri S."/>
            <person name="Clegg C."/>
            <person name="Moore M."/>
            <person name="Grant F.J."/>
            <person name="Lofton-Day C."/>
            <person name="Gilbert T."/>
            <person name="Raymond F."/>
            <person name="Ching A."/>
            <person name="Yao L."/>
            <person name="Smith D."/>
            <person name="Webster P."/>
            <person name="Whitmore T."/>
            <person name="Maurer M."/>
            <person name="Kaushansky K."/>
            <person name="Holly R.D."/>
            <person name="Foster D."/>
        </authorList>
    </citation>
    <scope>NUCLEOTIDE SEQUENCE [MRNA]</scope>
    <source>
        <strain>C57BL/6J</strain>
    </source>
</reference>
<reference key="2">
    <citation type="journal article" date="2000" name="Proc. Natl. Acad. Sci. U.S.A.">
        <title>Cloning of a type I cytokine receptor most related to the IL-2 receptor beta chain.</title>
        <authorList>
            <person name="Ozaki K."/>
            <person name="Kikly K."/>
            <person name="Michalovich D."/>
            <person name="Young P.R."/>
            <person name="Leonard W.J."/>
        </authorList>
    </citation>
    <scope>NUCLEOTIDE SEQUENCE [MRNA]</scope>
    <source>
        <tissue>Spleen</tissue>
        <tissue>Thymus</tissue>
    </source>
</reference>
<reference key="3">
    <citation type="submission" date="2000-06" db="EMBL/GenBank/DDBJ databases">
        <title>Chromosome 16p12 encodes a biologically active IL-2Rb related receptor with lymphoid restricted expression.</title>
        <authorList>
            <person name="Donaldson D.D."/>
            <person name="Whitters M.J."/>
            <person name="Fitz L."/>
            <person name="Unger M."/>
            <person name="Finnerty H."/>
            <person name="Dagdigian C."/>
            <person name="Lowe L."/>
            <person name="Wood C.R."/>
            <person name="Young D.A."/>
            <person name="Collins M."/>
        </authorList>
    </citation>
    <scope>NUCLEOTIDE SEQUENCE [MRNA]</scope>
</reference>
<reference key="4">
    <citation type="submission" date="2000-09" db="EMBL/GenBank/DDBJ databases">
        <title>A novel cytokine receptor NR8 is closely mapped to IL-4R: polymorphism in Balb/c mouse.</title>
        <authorList>
            <person name="Nomura H."/>
            <person name="Yaguchi N."/>
            <person name="Maeda M."/>
            <person name="Hasegawa M."/>
        </authorList>
    </citation>
    <scope>NUCLEOTIDE SEQUENCE [MRNA]</scope>
    <source>
        <strain>BALB/cJ</strain>
    </source>
</reference>
<reference key="5">
    <citation type="submission" date="2002-01" db="EMBL/GenBank/DDBJ databases">
        <title>Mus musculus interleukin 21 receptor gene Il21r mRNA.</title>
        <authorList>
            <person name="Gao J."/>
            <person name="Teuscher C."/>
        </authorList>
    </citation>
    <scope>NUCLEOTIDE SEQUENCE [MRNA]</scope>
    <source>
        <strain>A/J</strain>
        <strain>B10.S/DvTe</strain>
        <strain>C57BL/6J</strain>
        <strain>NOD/LtJ</strain>
        <strain>SJL/J</strain>
        <tissue>Spleen</tissue>
    </source>
</reference>
<dbReference type="EMBL" id="AF254068">
    <property type="protein sequence ID" value="AAG29347.1"/>
    <property type="molecule type" value="mRNA"/>
</dbReference>
<dbReference type="EMBL" id="AF269134">
    <property type="protein sequence ID" value="AAG23420.1"/>
    <property type="molecule type" value="mRNA"/>
</dbReference>
<dbReference type="EMBL" id="AF279436">
    <property type="protein sequence ID" value="AAF86350.1"/>
    <property type="molecule type" value="mRNA"/>
</dbReference>
<dbReference type="EMBL" id="AB049137">
    <property type="protein sequence ID" value="BAB13736.1"/>
    <property type="molecule type" value="mRNA"/>
</dbReference>
<dbReference type="EMBL" id="AF477982">
    <property type="protein sequence ID" value="AAL82632.1"/>
    <property type="molecule type" value="mRNA"/>
</dbReference>
<dbReference type="EMBL" id="AF477983">
    <property type="protein sequence ID" value="AAL82633.1"/>
    <property type="molecule type" value="mRNA"/>
</dbReference>
<dbReference type="EMBL" id="AF477984">
    <property type="protein sequence ID" value="AAL82634.1"/>
    <property type="molecule type" value="mRNA"/>
</dbReference>
<dbReference type="EMBL" id="AF477985">
    <property type="protein sequence ID" value="AAL82635.1"/>
    <property type="molecule type" value="mRNA"/>
</dbReference>
<dbReference type="EMBL" id="AF477986">
    <property type="protein sequence ID" value="AAL82636.1"/>
    <property type="molecule type" value="mRNA"/>
</dbReference>
<dbReference type="CCDS" id="CCDS21823.1"/>
<dbReference type="RefSeq" id="NP_068687.1">
    <property type="nucleotide sequence ID" value="NM_021887.2"/>
</dbReference>
<dbReference type="SMR" id="Q9JHX3"/>
<dbReference type="FunCoup" id="Q9JHX3">
    <property type="interactions" value="625"/>
</dbReference>
<dbReference type="STRING" id="10090.ENSMUSP00000033000"/>
<dbReference type="GlyCosmos" id="Q9JHX3">
    <property type="glycosylation" value="6 sites, No reported glycans"/>
</dbReference>
<dbReference type="GlyGen" id="Q9JHX3">
    <property type="glycosylation" value="7 sites"/>
</dbReference>
<dbReference type="iPTMnet" id="Q9JHX3"/>
<dbReference type="PhosphoSitePlus" id="Q9JHX3"/>
<dbReference type="PaxDb" id="10090-ENSMUSP00000033000"/>
<dbReference type="ProteomicsDB" id="267040"/>
<dbReference type="ABCD" id="Q9JHX3">
    <property type="antibodies" value="35 sequenced antibodies"/>
</dbReference>
<dbReference type="Antibodypedia" id="12828">
    <property type="antibodies" value="497 antibodies from 43 providers"/>
</dbReference>
<dbReference type="DNASU" id="60504"/>
<dbReference type="Ensembl" id="ENSMUST00000033000.8">
    <property type="protein sequence ID" value="ENSMUSP00000033000.7"/>
    <property type="gene ID" value="ENSMUSG00000030745.10"/>
</dbReference>
<dbReference type="GeneID" id="60504"/>
<dbReference type="KEGG" id="mmu:60504"/>
<dbReference type="UCSC" id="uc012ftn.1">
    <property type="organism name" value="mouse"/>
</dbReference>
<dbReference type="AGR" id="MGI:1890475"/>
<dbReference type="CTD" id="50615"/>
<dbReference type="MGI" id="MGI:1890475">
    <property type="gene designation" value="Il21r"/>
</dbReference>
<dbReference type="VEuPathDB" id="HostDB:ENSMUSG00000030745"/>
<dbReference type="eggNOG" id="ENOG502S0QM">
    <property type="taxonomic scope" value="Eukaryota"/>
</dbReference>
<dbReference type="GeneTree" id="ENSGT00510000048783"/>
<dbReference type="HOGENOM" id="CLU_039739_0_0_1"/>
<dbReference type="InParanoid" id="Q9JHX3"/>
<dbReference type="OMA" id="CGWAAPL"/>
<dbReference type="OrthoDB" id="8939865at2759"/>
<dbReference type="PhylomeDB" id="Q9JHX3"/>
<dbReference type="TreeFam" id="TF337874"/>
<dbReference type="Reactome" id="R-MMU-9020958">
    <property type="pathway name" value="Interleukin-21 signaling"/>
</dbReference>
<dbReference type="BioGRID-ORCS" id="60504">
    <property type="hits" value="1 hit in 78 CRISPR screens"/>
</dbReference>
<dbReference type="ChiTaRS" id="Il21r">
    <property type="organism name" value="mouse"/>
</dbReference>
<dbReference type="PRO" id="PR:Q9JHX3"/>
<dbReference type="Proteomes" id="UP000000589">
    <property type="component" value="Chromosome 7"/>
</dbReference>
<dbReference type="RNAct" id="Q9JHX3">
    <property type="molecule type" value="protein"/>
</dbReference>
<dbReference type="Bgee" id="ENSMUSG00000030745">
    <property type="expression patterns" value="Expressed in thymus and 45 other cell types or tissues"/>
</dbReference>
<dbReference type="ExpressionAtlas" id="Q9JHX3">
    <property type="expression patterns" value="baseline and differential"/>
</dbReference>
<dbReference type="GO" id="GO:0016020">
    <property type="term" value="C:membrane"/>
    <property type="evidence" value="ECO:0007669"/>
    <property type="project" value="UniProtKB-SubCell"/>
</dbReference>
<dbReference type="GO" id="GO:0004896">
    <property type="term" value="F:cytokine receptor activity"/>
    <property type="evidence" value="ECO:0000314"/>
    <property type="project" value="MGI"/>
</dbReference>
<dbReference type="GO" id="GO:0004888">
    <property type="term" value="F:transmembrane signaling receptor activity"/>
    <property type="evidence" value="ECO:0000266"/>
    <property type="project" value="MGI"/>
</dbReference>
<dbReference type="CDD" id="cd00063">
    <property type="entry name" value="FN3"/>
    <property type="match status" value="1"/>
</dbReference>
<dbReference type="FunFam" id="2.60.40.10:FF:001768">
    <property type="entry name" value="Interleukin-21 receptor"/>
    <property type="match status" value="1"/>
</dbReference>
<dbReference type="Gene3D" id="2.60.40.10">
    <property type="entry name" value="Immunoglobulins"/>
    <property type="match status" value="2"/>
</dbReference>
<dbReference type="InterPro" id="IPR003961">
    <property type="entry name" value="FN3_dom"/>
</dbReference>
<dbReference type="InterPro" id="IPR036116">
    <property type="entry name" value="FN3_sf"/>
</dbReference>
<dbReference type="InterPro" id="IPR003531">
    <property type="entry name" value="Hempt_rcpt_S_F1_CS"/>
</dbReference>
<dbReference type="InterPro" id="IPR013783">
    <property type="entry name" value="Ig-like_fold"/>
</dbReference>
<dbReference type="PANTHER" id="PTHR23037">
    <property type="entry name" value="CYTOKINE RECEPTOR"/>
    <property type="match status" value="1"/>
</dbReference>
<dbReference type="PANTHER" id="PTHR23037:SF7">
    <property type="entry name" value="INTERLEUKIN-21 RECEPTOR"/>
    <property type="match status" value="1"/>
</dbReference>
<dbReference type="SUPFAM" id="SSF49265">
    <property type="entry name" value="Fibronectin type III"/>
    <property type="match status" value="1"/>
</dbReference>
<dbReference type="PROSITE" id="PS50853">
    <property type="entry name" value="FN3"/>
    <property type="match status" value="1"/>
</dbReference>
<dbReference type="PROSITE" id="PS01355">
    <property type="entry name" value="HEMATOPO_REC_S_F1"/>
    <property type="match status" value="1"/>
</dbReference>
<organism>
    <name type="scientific">Mus musculus</name>
    <name type="common">Mouse</name>
    <dbReference type="NCBI Taxonomy" id="10090"/>
    <lineage>
        <taxon>Eukaryota</taxon>
        <taxon>Metazoa</taxon>
        <taxon>Chordata</taxon>
        <taxon>Craniata</taxon>
        <taxon>Vertebrata</taxon>
        <taxon>Euteleostomi</taxon>
        <taxon>Mammalia</taxon>
        <taxon>Eutheria</taxon>
        <taxon>Euarchontoglires</taxon>
        <taxon>Glires</taxon>
        <taxon>Rodentia</taxon>
        <taxon>Myomorpha</taxon>
        <taxon>Muroidea</taxon>
        <taxon>Muridae</taxon>
        <taxon>Murinae</taxon>
        <taxon>Mus</taxon>
        <taxon>Mus</taxon>
    </lineage>
</organism>
<proteinExistence type="evidence at transcript level"/>
<accession>Q9JHX3</accession>
<accession>Q9ESM1</accession>
<comment type="function">
    <text>This is a receptor for interleukin-21.</text>
</comment>
<comment type="subunit">
    <text>Heterodimer with the common gamma subunit. Associates with JAK1.</text>
</comment>
<comment type="subcellular location">
    <subcellularLocation>
        <location>Membrane</location>
        <topology>Single-pass type I membrane protein</topology>
    </subcellularLocation>
</comment>
<comment type="tissue specificity">
    <text>Selectively expressed in lymphoid tissues. Most highly expressed in thymus and spleen.</text>
</comment>
<comment type="domain">
    <text>The WSXWS motif appears to be necessary for proper protein folding and thereby efficient intracellular transport and cell-surface receptor binding.</text>
</comment>
<comment type="domain">
    <text>The box 1 motif is required for JAK interaction and/or activation.</text>
</comment>
<comment type="PTM">
    <text evidence="1">C-mannosylated at Trp-214 in the WSXWS motif, the sugar chain makes extensive hydrogen bonds with Asn-73 sugar, and bridges the two fibronectin domains transforming the V-shaped receptor into an A-frame.</text>
</comment>
<comment type="similarity">
    <text evidence="6">Belongs to the type I cytokine receptor family. Type 4 subfamily.</text>
</comment>
<keyword id="KW-1015">Disulfide bond</keyword>
<keyword id="KW-0325">Glycoprotein</keyword>
<keyword id="KW-0472">Membrane</keyword>
<keyword id="KW-0675">Receptor</keyword>
<keyword id="KW-1185">Reference proteome</keyword>
<keyword id="KW-0677">Repeat</keyword>
<keyword id="KW-0732">Signal</keyword>
<keyword id="KW-0812">Transmembrane</keyword>
<keyword id="KW-1133">Transmembrane helix</keyword>
<gene>
    <name type="primary">Il21r</name>
    <name type="synonym">Nilr</name>
</gene>
<evidence type="ECO:0000250" key="1"/>
<evidence type="ECO:0000250" key="2">
    <source>
        <dbReference type="UniProtKB" id="Q9HBE5"/>
    </source>
</evidence>
<evidence type="ECO:0000255" key="3"/>
<evidence type="ECO:0000255" key="4">
    <source>
        <dbReference type="PROSITE-ProRule" id="PRU00316"/>
    </source>
</evidence>
<evidence type="ECO:0000256" key="5">
    <source>
        <dbReference type="SAM" id="MobiDB-lite"/>
    </source>
</evidence>
<evidence type="ECO:0000305" key="6"/>